<gene>
    <name evidence="1" type="primary">glsA2</name>
    <name type="ordered locus">BC_3115</name>
</gene>
<dbReference type="EC" id="3.5.1.2" evidence="1"/>
<dbReference type="EMBL" id="AE016877">
    <property type="protein sequence ID" value="AAP10058.1"/>
    <property type="molecule type" value="Genomic_DNA"/>
</dbReference>
<dbReference type="RefSeq" id="NP_832857.1">
    <property type="nucleotide sequence ID" value="NC_004722.1"/>
</dbReference>
<dbReference type="SMR" id="Q81BN7"/>
<dbReference type="STRING" id="226900.BC_3115"/>
<dbReference type="KEGG" id="bce:BC3115"/>
<dbReference type="PATRIC" id="fig|226900.8.peg.3197"/>
<dbReference type="HOGENOM" id="CLU_027932_1_0_9"/>
<dbReference type="OrthoDB" id="9788822at2"/>
<dbReference type="Proteomes" id="UP000001417">
    <property type="component" value="Chromosome"/>
</dbReference>
<dbReference type="GO" id="GO:0004359">
    <property type="term" value="F:glutaminase activity"/>
    <property type="evidence" value="ECO:0000318"/>
    <property type="project" value="GO_Central"/>
</dbReference>
<dbReference type="GO" id="GO:0006537">
    <property type="term" value="P:glutamate biosynthetic process"/>
    <property type="evidence" value="ECO:0000318"/>
    <property type="project" value="GO_Central"/>
</dbReference>
<dbReference type="GO" id="GO:0006543">
    <property type="term" value="P:glutamine catabolic process"/>
    <property type="evidence" value="ECO:0000318"/>
    <property type="project" value="GO_Central"/>
</dbReference>
<dbReference type="FunFam" id="1.10.1500.10:FF:000001">
    <property type="entry name" value="Glutaminase"/>
    <property type="match status" value="1"/>
</dbReference>
<dbReference type="FunFam" id="3.40.710.10:FF:000005">
    <property type="entry name" value="Glutaminase"/>
    <property type="match status" value="1"/>
</dbReference>
<dbReference type="Gene3D" id="1.10.1500.10">
    <property type="match status" value="1"/>
</dbReference>
<dbReference type="Gene3D" id="3.40.710.10">
    <property type="entry name" value="DD-peptidase/beta-lactamase superfamily"/>
    <property type="match status" value="1"/>
</dbReference>
<dbReference type="HAMAP" id="MF_00313">
    <property type="entry name" value="Glutaminase"/>
    <property type="match status" value="1"/>
</dbReference>
<dbReference type="InterPro" id="IPR012338">
    <property type="entry name" value="Beta-lactam/transpept-like"/>
</dbReference>
<dbReference type="InterPro" id="IPR015868">
    <property type="entry name" value="Glutaminase"/>
</dbReference>
<dbReference type="NCBIfam" id="TIGR03814">
    <property type="entry name" value="Gln_ase"/>
    <property type="match status" value="1"/>
</dbReference>
<dbReference type="NCBIfam" id="NF009021">
    <property type="entry name" value="PRK12357.1"/>
    <property type="match status" value="1"/>
</dbReference>
<dbReference type="PANTHER" id="PTHR12544">
    <property type="entry name" value="GLUTAMINASE"/>
    <property type="match status" value="1"/>
</dbReference>
<dbReference type="PANTHER" id="PTHR12544:SF32">
    <property type="entry name" value="GLUTAMINASE 1"/>
    <property type="match status" value="1"/>
</dbReference>
<dbReference type="Pfam" id="PF04960">
    <property type="entry name" value="Glutaminase"/>
    <property type="match status" value="1"/>
</dbReference>
<dbReference type="SUPFAM" id="SSF56601">
    <property type="entry name" value="beta-lactamase/transpeptidase-like"/>
    <property type="match status" value="1"/>
</dbReference>
<sequence length="326" mass="35856">MIKDSSVQVEGQEKVCLDQWVAHYRAYAAKGRSASYIPALGEINVSQLGICIVKPDGTMIKSGDWEIPFTLQSISKVIGFIAACLSRGISYVLERVDVEPTGDAFNSIIRLEIHKPGKPFNPMINAGAITIASLLPGTSVQEKLESLYVLIEKMIEKRPAINEIVFQSEWETAHRNRALAYYLKENGFLESDVEETLEVYLKQCSIEINTEDIALIGLILAHDGYHPIRKEQVLPKEVARLTKALMLTCGMYNASGKFAAFIGLPAKSGVSGGIMTLVPSKSRKDLSFQDGCGIGIYGPAIDEYGNSLPGIMLLEHIAKEWDLSIF</sequence>
<feature type="chain" id="PRO_0000110591" description="Glutaminase 2">
    <location>
        <begin position="1"/>
        <end position="326"/>
    </location>
</feature>
<feature type="binding site" evidence="1">
    <location>
        <position position="73"/>
    </location>
    <ligand>
        <name>substrate</name>
    </ligand>
</feature>
<feature type="binding site" evidence="1">
    <location>
        <position position="125"/>
    </location>
    <ligand>
        <name>substrate</name>
    </ligand>
</feature>
<feature type="binding site" evidence="1">
    <location>
        <position position="169"/>
    </location>
    <ligand>
        <name>substrate</name>
    </ligand>
</feature>
<feature type="binding site" evidence="1">
    <location>
        <position position="176"/>
    </location>
    <ligand>
        <name>substrate</name>
    </ligand>
</feature>
<feature type="binding site" evidence="1">
    <location>
        <position position="200"/>
    </location>
    <ligand>
        <name>substrate</name>
    </ligand>
</feature>
<feature type="binding site" evidence="1">
    <location>
        <position position="252"/>
    </location>
    <ligand>
        <name>substrate</name>
    </ligand>
</feature>
<feature type="binding site" evidence="1">
    <location>
        <position position="270"/>
    </location>
    <ligand>
        <name>substrate</name>
    </ligand>
</feature>
<comment type="catalytic activity">
    <reaction evidence="1">
        <text>L-glutamine + H2O = L-glutamate + NH4(+)</text>
        <dbReference type="Rhea" id="RHEA:15889"/>
        <dbReference type="ChEBI" id="CHEBI:15377"/>
        <dbReference type="ChEBI" id="CHEBI:28938"/>
        <dbReference type="ChEBI" id="CHEBI:29985"/>
        <dbReference type="ChEBI" id="CHEBI:58359"/>
        <dbReference type="EC" id="3.5.1.2"/>
    </reaction>
</comment>
<comment type="subunit">
    <text evidence="1">Homotetramer.</text>
</comment>
<comment type="similarity">
    <text evidence="1">Belongs to the glutaminase family.</text>
</comment>
<reference key="1">
    <citation type="journal article" date="2003" name="Nature">
        <title>Genome sequence of Bacillus cereus and comparative analysis with Bacillus anthracis.</title>
        <authorList>
            <person name="Ivanova N."/>
            <person name="Sorokin A."/>
            <person name="Anderson I."/>
            <person name="Galleron N."/>
            <person name="Candelon B."/>
            <person name="Kapatral V."/>
            <person name="Bhattacharyya A."/>
            <person name="Reznik G."/>
            <person name="Mikhailova N."/>
            <person name="Lapidus A."/>
            <person name="Chu L."/>
            <person name="Mazur M."/>
            <person name="Goltsman E."/>
            <person name="Larsen N."/>
            <person name="D'Souza M."/>
            <person name="Walunas T."/>
            <person name="Grechkin Y."/>
            <person name="Pusch G."/>
            <person name="Haselkorn R."/>
            <person name="Fonstein M."/>
            <person name="Ehrlich S.D."/>
            <person name="Overbeek R."/>
            <person name="Kyrpides N.C."/>
        </authorList>
    </citation>
    <scope>NUCLEOTIDE SEQUENCE [LARGE SCALE GENOMIC DNA]</scope>
    <source>
        <strain>ATCC 14579 / DSM 31 / CCUG 7414 / JCM 2152 / NBRC 15305 / NCIMB 9373 / NCTC 2599 / NRRL B-3711</strain>
    </source>
</reference>
<keyword id="KW-0378">Hydrolase</keyword>
<keyword id="KW-1185">Reference proteome</keyword>
<evidence type="ECO:0000255" key="1">
    <source>
        <dbReference type="HAMAP-Rule" id="MF_00313"/>
    </source>
</evidence>
<name>GLSA2_BACCR</name>
<proteinExistence type="inferred from homology"/>
<accession>Q81BN7</accession>
<organism>
    <name type="scientific">Bacillus cereus (strain ATCC 14579 / DSM 31 / CCUG 7414 / JCM 2152 / NBRC 15305 / NCIMB 9373 / NCTC 2599 / NRRL B-3711)</name>
    <dbReference type="NCBI Taxonomy" id="226900"/>
    <lineage>
        <taxon>Bacteria</taxon>
        <taxon>Bacillati</taxon>
        <taxon>Bacillota</taxon>
        <taxon>Bacilli</taxon>
        <taxon>Bacillales</taxon>
        <taxon>Bacillaceae</taxon>
        <taxon>Bacillus</taxon>
        <taxon>Bacillus cereus group</taxon>
    </lineage>
</organism>
<protein>
    <recommendedName>
        <fullName evidence="1">Glutaminase 2</fullName>
        <ecNumber evidence="1">3.5.1.2</ecNumber>
    </recommendedName>
</protein>